<proteinExistence type="inferred from homology"/>
<organism>
    <name type="scientific">Mycobacterium sp. (strain JLS)</name>
    <dbReference type="NCBI Taxonomy" id="164757"/>
    <lineage>
        <taxon>Bacteria</taxon>
        <taxon>Bacillati</taxon>
        <taxon>Actinomycetota</taxon>
        <taxon>Actinomycetes</taxon>
        <taxon>Mycobacteriales</taxon>
        <taxon>Mycobacteriaceae</taxon>
        <taxon>Mycobacterium</taxon>
    </lineage>
</organism>
<comment type="function">
    <text evidence="1">An anti-sigma factor for extracytoplasmic function (ECF) sigma factor SigK. ECF sigma factors are held in an inactive form by an anti-sigma factor until released by regulated intramembrane proteolysis (RIP). RIP occurs when an extracytoplasmic signal triggers a concerted proteolytic cascade to transmit information and elicit cellular responses. The membrane-spanning regulatory substrate protein is first cut extracytoplasmically (site-1 protease, S1P), then within the membrane itself (site-2 protease, S2P, Rip1), while cytoplasmic proteases finish degrading the regulatory protein, liberating the sigma factor (By similarity).</text>
</comment>
<comment type="subcellular location">
    <subcellularLocation>
        <location evidence="4">Cell membrane</location>
        <topology evidence="4">Single-pass membrane protein</topology>
    </subcellularLocation>
</comment>
<comment type="domain">
    <text evidence="1">The cytosolic domain interacts with sigma factor SigK.</text>
</comment>
<comment type="similarity">
    <text evidence="4">Belongs to the anti-sigma-K factor family.</text>
</comment>
<accession>A3Q5U1</accession>
<protein>
    <recommendedName>
        <fullName>Anti-sigma-K factor RskA</fullName>
    </recommendedName>
    <alternativeName>
        <fullName>Regulator of SigK</fullName>
    </alternativeName>
    <alternativeName>
        <fullName>Sigma-K anti-sigma factor RskA</fullName>
    </alternativeName>
</protein>
<dbReference type="EMBL" id="CP000580">
    <property type="protein sequence ID" value="ABO00519.1"/>
    <property type="molecule type" value="Genomic_DNA"/>
</dbReference>
<dbReference type="SMR" id="A3Q5U1"/>
<dbReference type="KEGG" id="mjl:Mjls_4753"/>
<dbReference type="HOGENOM" id="CLU_075802_1_1_11"/>
<dbReference type="BioCyc" id="MSP164757:G1G8C-4798-MONOMER"/>
<dbReference type="GO" id="GO:0005886">
    <property type="term" value="C:plasma membrane"/>
    <property type="evidence" value="ECO:0007669"/>
    <property type="project" value="UniProtKB-SubCell"/>
</dbReference>
<dbReference type="GO" id="GO:0016989">
    <property type="term" value="F:sigma factor antagonist activity"/>
    <property type="evidence" value="ECO:0007669"/>
    <property type="project" value="TreeGrafter"/>
</dbReference>
<dbReference type="GO" id="GO:0006417">
    <property type="term" value="P:regulation of translation"/>
    <property type="evidence" value="ECO:0007669"/>
    <property type="project" value="TreeGrafter"/>
</dbReference>
<dbReference type="Gene3D" id="1.10.10.1320">
    <property type="entry name" value="Anti-sigma factor, zinc-finger domain"/>
    <property type="match status" value="1"/>
</dbReference>
<dbReference type="InterPro" id="IPR051474">
    <property type="entry name" value="Anti-sigma-K/W_factor"/>
</dbReference>
<dbReference type="InterPro" id="IPR041916">
    <property type="entry name" value="Anti_sigma_zinc_sf"/>
</dbReference>
<dbReference type="InterPro" id="IPR018764">
    <property type="entry name" value="RskA_C"/>
</dbReference>
<dbReference type="InterPro" id="IPR053877">
    <property type="entry name" value="RskA_N"/>
</dbReference>
<dbReference type="PANTHER" id="PTHR37461">
    <property type="entry name" value="ANTI-SIGMA-K FACTOR RSKA"/>
    <property type="match status" value="1"/>
</dbReference>
<dbReference type="PANTHER" id="PTHR37461:SF1">
    <property type="entry name" value="ANTI-SIGMA-K FACTOR RSKA"/>
    <property type="match status" value="1"/>
</dbReference>
<dbReference type="Pfam" id="PF10099">
    <property type="entry name" value="RskA_C"/>
    <property type="match status" value="1"/>
</dbReference>
<dbReference type="Pfam" id="PF22618">
    <property type="entry name" value="RskA_N"/>
    <property type="match status" value="1"/>
</dbReference>
<sequence length="243" mass="25147">MTEPNNTDLLDLATPYALHAVSIDERFEIDRWLATAPPEVADAFTDEVRSVQETMAVLSAATATEPPAHLRDNVLAMVADDPVRDLGSARRRRGGESRWRTAVLAAAAVAVVGLGALGVGLALRPAVSPTTADQVFAAPDVQTVSGPIPGGGTATVVFSKERDAGVLVMNDVAPPKPGTVYQMWLVGSDGPHSAGTMDDKAISPSTTAVLSDIGTSQALAFTVEPPGGSQRPTSPAFAELPLT</sequence>
<gene>
    <name type="primary">rskA</name>
    <name type="ordered locus">Mjls_4753</name>
</gene>
<name>RSKA_MYCSJ</name>
<keyword id="KW-1003">Cell membrane</keyword>
<keyword id="KW-0472">Membrane</keyword>
<keyword id="KW-0804">Transcription</keyword>
<keyword id="KW-0805">Transcription regulation</keyword>
<keyword id="KW-0812">Transmembrane</keyword>
<keyword id="KW-1133">Transmembrane helix</keyword>
<reference key="1">
    <citation type="submission" date="2007-02" db="EMBL/GenBank/DDBJ databases">
        <title>Complete sequence of Mycobacterium sp. JLS.</title>
        <authorList>
            <consortium name="US DOE Joint Genome Institute"/>
            <person name="Copeland A."/>
            <person name="Lucas S."/>
            <person name="Lapidus A."/>
            <person name="Barry K."/>
            <person name="Detter J.C."/>
            <person name="Glavina del Rio T."/>
            <person name="Hammon N."/>
            <person name="Israni S."/>
            <person name="Dalin E."/>
            <person name="Tice H."/>
            <person name="Pitluck S."/>
            <person name="Chain P."/>
            <person name="Malfatti S."/>
            <person name="Shin M."/>
            <person name="Vergez L."/>
            <person name="Schmutz J."/>
            <person name="Larimer F."/>
            <person name="Land M."/>
            <person name="Hauser L."/>
            <person name="Kyrpides N."/>
            <person name="Mikhailova N."/>
            <person name="Miller C.D."/>
            <person name="Anderson A.J."/>
            <person name="Sims R.C."/>
            <person name="Richardson P."/>
        </authorList>
    </citation>
    <scope>NUCLEOTIDE SEQUENCE [LARGE SCALE GENOMIC DNA]</scope>
    <source>
        <strain>JLS</strain>
    </source>
</reference>
<evidence type="ECO:0000250" key="1"/>
<evidence type="ECO:0000255" key="2"/>
<evidence type="ECO:0000256" key="3">
    <source>
        <dbReference type="SAM" id="MobiDB-lite"/>
    </source>
</evidence>
<evidence type="ECO:0000305" key="4"/>
<feature type="chain" id="PRO_0000313832" description="Anti-sigma-K factor RskA">
    <location>
        <begin position="1"/>
        <end position="243"/>
    </location>
</feature>
<feature type="topological domain" description="Cytoplasmic" evidence="2">
    <location>
        <begin position="1"/>
        <end position="102"/>
    </location>
</feature>
<feature type="transmembrane region" description="Helical" evidence="2">
    <location>
        <begin position="103"/>
        <end position="123"/>
    </location>
</feature>
<feature type="topological domain" description="Extracellular" evidence="2">
    <location>
        <begin position="124"/>
        <end position="243"/>
    </location>
</feature>
<feature type="region of interest" description="Disordered" evidence="3">
    <location>
        <begin position="223"/>
        <end position="243"/>
    </location>
</feature>